<gene>
    <name evidence="6" type="primary">TRAJ31</name>
</gene>
<keyword id="KW-1064">Adaptive immunity</keyword>
<keyword id="KW-1003">Cell membrane</keyword>
<keyword id="KW-0391">Immunity</keyword>
<keyword id="KW-0472">Membrane</keyword>
<keyword id="KW-1185">Reference proteome</keyword>
<sequence>NNNARLMFGDGTQLVVKP</sequence>
<accession>A0A075B700</accession>
<name>TJA31_HUMAN</name>
<evidence type="ECO:0000303" key="1">
    <source>
    </source>
</evidence>
<evidence type="ECO:0000303" key="2">
    <source>
    </source>
</evidence>
<evidence type="ECO:0000303" key="3">
    <source>
    </source>
</evidence>
<evidence type="ECO:0000303" key="4">
    <source>
    </source>
</evidence>
<evidence type="ECO:0000303" key="5">
    <source>
    </source>
</evidence>
<evidence type="ECO:0000303" key="6">
    <source ref="2"/>
</evidence>
<protein>
    <recommendedName>
        <fullName evidence="6">T cell receptor alpha joining 31</fullName>
    </recommendedName>
</protein>
<proteinExistence type="predicted"/>
<feature type="chain" id="PRO_0000450079" description="T cell receptor alpha joining 31">
    <location>
        <begin position="1" status="less than"/>
        <end position="18" status="greater than"/>
    </location>
</feature>
<feature type="non-terminal residue">
    <location>
        <position position="1"/>
    </location>
</feature>
<feature type="non-terminal residue">
    <location>
        <position position="18"/>
    </location>
</feature>
<organism>
    <name type="scientific">Homo sapiens</name>
    <name type="common">Human</name>
    <dbReference type="NCBI Taxonomy" id="9606"/>
    <lineage>
        <taxon>Eukaryota</taxon>
        <taxon>Metazoa</taxon>
        <taxon>Chordata</taxon>
        <taxon>Craniata</taxon>
        <taxon>Vertebrata</taxon>
        <taxon>Euteleostomi</taxon>
        <taxon>Mammalia</taxon>
        <taxon>Eutheria</taxon>
        <taxon>Euarchontoglires</taxon>
        <taxon>Primates</taxon>
        <taxon>Haplorrhini</taxon>
        <taxon>Catarrhini</taxon>
        <taxon>Hominidae</taxon>
        <taxon>Homo</taxon>
    </lineage>
</organism>
<dbReference type="EMBL" id="AC243965">
    <property type="status" value="NOT_ANNOTATED_CDS"/>
    <property type="molecule type" value="Genomic_DNA"/>
</dbReference>
<dbReference type="IMGT_GENE-DB" id="TRAJ31"/>
<dbReference type="BioMuta" id="TRAJ31"/>
<dbReference type="Ensembl" id="ENST00000390506.1">
    <property type="protein sequence ID" value="ENSP00000452141.1"/>
    <property type="gene ID" value="ENSG00000211858.1"/>
</dbReference>
<dbReference type="UCSC" id="uc058zgj.1">
    <property type="organism name" value="human"/>
</dbReference>
<dbReference type="AGR" id="HGNC:12061"/>
<dbReference type="GeneCards" id="TRAJ31"/>
<dbReference type="HGNC" id="HGNC:12061">
    <property type="gene designation" value="TRAJ31"/>
</dbReference>
<dbReference type="HPA" id="ENSG00000211858">
    <property type="expression patterns" value="Group enriched (lymphoid tissue, retina)"/>
</dbReference>
<dbReference type="neXtProt" id="NX_A0A075B700"/>
<dbReference type="VEuPathDB" id="HostDB:ENSG00000211858"/>
<dbReference type="HOGENOM" id="CLU_221942_3_3_1"/>
<dbReference type="InParanoid" id="A0A075B700"/>
<dbReference type="PAN-GO" id="A0A075B700">
    <property type="GO annotations" value="0 GO annotations based on evolutionary models"/>
</dbReference>
<dbReference type="PRO" id="PR:A0A075B700"/>
<dbReference type="Proteomes" id="UP000005640">
    <property type="component" value="Chromosome 14"/>
</dbReference>
<dbReference type="Bgee" id="ENSG00000211858">
    <property type="expression patterns" value="Expressed in granulocyte and 66 other cell types or tissues"/>
</dbReference>
<dbReference type="GO" id="GO:0005886">
    <property type="term" value="C:plasma membrane"/>
    <property type="evidence" value="ECO:0007669"/>
    <property type="project" value="UniProtKB-SubCell"/>
</dbReference>
<dbReference type="GO" id="GO:0002250">
    <property type="term" value="P:adaptive immune response"/>
    <property type="evidence" value="ECO:0007669"/>
    <property type="project" value="UniProtKB-KW"/>
</dbReference>
<reference key="1">
    <citation type="journal article" date="2003" name="Nature">
        <title>The DNA sequence and analysis of human chromosome 14.</title>
        <authorList>
            <person name="Heilig R."/>
            <person name="Eckenberg R."/>
            <person name="Petit J.-L."/>
            <person name="Fonknechten N."/>
            <person name="Da Silva C."/>
            <person name="Cattolico L."/>
            <person name="Levy M."/>
            <person name="Barbe V."/>
            <person name="De Berardinis V."/>
            <person name="Ureta-Vidal A."/>
            <person name="Pelletier E."/>
            <person name="Vico V."/>
            <person name="Anthouard V."/>
            <person name="Rowen L."/>
            <person name="Madan A."/>
            <person name="Qin S."/>
            <person name="Sun H."/>
            <person name="Du H."/>
            <person name="Pepin K."/>
            <person name="Artiguenave F."/>
            <person name="Robert C."/>
            <person name="Cruaud C."/>
            <person name="Bruels T."/>
            <person name="Jaillon O."/>
            <person name="Friedlander L."/>
            <person name="Samson G."/>
            <person name="Brottier P."/>
            <person name="Cure S."/>
            <person name="Segurens B."/>
            <person name="Aniere F."/>
            <person name="Samain S."/>
            <person name="Crespeau H."/>
            <person name="Abbasi N."/>
            <person name="Aiach N."/>
            <person name="Boscus D."/>
            <person name="Dickhoff R."/>
            <person name="Dors M."/>
            <person name="Dubois I."/>
            <person name="Friedman C."/>
            <person name="Gouyvenoux M."/>
            <person name="James R."/>
            <person name="Madan A."/>
            <person name="Mairey-Estrada B."/>
            <person name="Mangenot S."/>
            <person name="Martins N."/>
            <person name="Menard M."/>
            <person name="Oztas S."/>
            <person name="Ratcliffe A."/>
            <person name="Shaffer T."/>
            <person name="Trask B."/>
            <person name="Vacherie B."/>
            <person name="Bellemere C."/>
            <person name="Belser C."/>
            <person name="Besnard-Gonnet M."/>
            <person name="Bartol-Mavel D."/>
            <person name="Boutard M."/>
            <person name="Briez-Silla S."/>
            <person name="Combette S."/>
            <person name="Dufosse-Laurent V."/>
            <person name="Ferron C."/>
            <person name="Lechaplais C."/>
            <person name="Louesse C."/>
            <person name="Muselet D."/>
            <person name="Magdelenat G."/>
            <person name="Pateau E."/>
            <person name="Petit E."/>
            <person name="Sirvain-Trukniewicz P."/>
            <person name="Trybou A."/>
            <person name="Vega-Czarny N."/>
            <person name="Bataille E."/>
            <person name="Bluet E."/>
            <person name="Bordelais I."/>
            <person name="Dubois M."/>
            <person name="Dumont C."/>
            <person name="Guerin T."/>
            <person name="Haffray S."/>
            <person name="Hammadi R."/>
            <person name="Muanga J."/>
            <person name="Pellouin V."/>
            <person name="Robert D."/>
            <person name="Wunderle E."/>
            <person name="Gauguet G."/>
            <person name="Roy A."/>
            <person name="Sainte-Marthe L."/>
            <person name="Verdier J."/>
            <person name="Verdier-Discala C."/>
            <person name="Hillier L.W."/>
            <person name="Fulton L."/>
            <person name="McPherson J."/>
            <person name="Matsuda F."/>
            <person name="Wilson R."/>
            <person name="Scarpelli C."/>
            <person name="Gyapay G."/>
            <person name="Wincker P."/>
            <person name="Saurin W."/>
            <person name="Quetier F."/>
            <person name="Waterston R."/>
            <person name="Hood L."/>
            <person name="Weissenbach J."/>
        </authorList>
    </citation>
    <scope>NUCLEOTIDE SEQUENCE [LARGE SCALE GENOMIC DNA] (IMGT ALLELE TRAJ31*01)</scope>
</reference>
<reference key="2">
    <citation type="book" date="2001" name="The T Cell Receptor FactsBook.">
        <title>The T Cell Receptor FactsBook.</title>
        <editorList>
            <person name="Lefranc M.P."/>
            <person name="Lefranc G."/>
        </editorList>
        <authorList>
            <person name="Lefranc M.P."/>
            <person name="Lefranc G."/>
        </authorList>
    </citation>
    <scope>NOMENCLATURE</scope>
</reference>
<reference key="3">
    <citation type="journal article" date="2004" name="Nat. Rev. Immunol.">
        <title>The many important facets of T-cell repertoire diversity.</title>
        <authorList>
            <person name="Nikolich-Zugich J."/>
            <person name="Slifka M.K."/>
            <person name="Messaoudi I."/>
        </authorList>
    </citation>
    <scope>REVIEW ON T CELL REPERTOIRE DIVERSITY</scope>
</reference>
<reference key="4">
    <citation type="journal article" date="2010" name="Cold Spring Harb. Perspect. Biol.">
        <title>Structural biology of the T-cell receptor: insights into receptor assembly, ligand recognition, and initiation of signaling.</title>
        <authorList>
            <person name="Wucherpfennig K.W."/>
            <person name="Gagnon E."/>
            <person name="Call M.J."/>
            <person name="Huseby E.S."/>
            <person name="Call M.E."/>
        </authorList>
    </citation>
    <scope>REVIEW ON T CELL RECEPTOR-CD3 COMPLEX ASSEMBLY</scope>
    <scope>SUBCELLULAR LOCATION</scope>
</reference>
<reference key="5">
    <citation type="journal article" date="2013" name="Nat. Rev. Immunol.">
        <title>T cell receptor signalling networks: branched, diversified and bounded.</title>
        <authorList>
            <person name="Brownlie R.J."/>
            <person name="Zamoyska R."/>
        </authorList>
    </citation>
    <scope>REVIEW ON T CELL RECEPTOR SIGNALING</scope>
</reference>
<reference key="6">
    <citation type="journal article" date="2014" name="Front. Immunol.">
        <title>Immunoglobulin and T Cell Receptor Genes: IMGT((R)) and the Birth and Rise of Immunoinformatics.</title>
        <authorList>
            <person name="Lefranc M.P."/>
        </authorList>
    </citation>
    <scope>NOMENCLATURE</scope>
</reference>
<reference key="7">
    <citation type="journal article" date="2015" name="Annu. Rev. Immunol.">
        <title>T cell antigen receptor recognition of antigen-presenting molecules.</title>
        <authorList>
            <person name="Rossjohn J."/>
            <person name="Gras S."/>
            <person name="Miles J.J."/>
            <person name="Turner S.J."/>
            <person name="Godfrey D.I."/>
            <person name="McCluskey J."/>
        </authorList>
    </citation>
    <scope>REVIEW ON FUNCTION</scope>
</reference>
<comment type="function">
    <text evidence="1 3 4 5">J region of the variable domain of T cell receptor (TR) beta chain that participates in the antigen recognition (PubMed:24600447). Alpha-beta T cell receptors are antigen specific receptors which are essential to the immune response and are present on the cell surface of T lymphocytes. Recognize peptide-major histocompatibility (MH) (pMH) complexes that are displayed by antigen presenting cells (APC), a prerequisite for efficient T cell adaptive immunity against pathogens (PubMed:25493333). Binding of alpha-beta TR to pMH complex initiates TR-CD3 clustering on the cell surface and intracellular activation of LCK that phosphorylates the ITAM motifs of CD3G, CD3D, CD3E and CD247 enabling the recruitment of ZAP70. In turn ZAP70 phosphorylates LAT, which recruits numerous signaling molecules to form the LAT signalosome. The LAT signalosome propagates signal branching to three major signaling pathways, the calcium, the mitogen-activated protein kinase (MAPK) kinase and the nuclear factor NF-kappa-B (NF-kB) pathways, leading to the mobilization of transcription factors that are critical for gene expression and essential for T cell growth and differentiation (PubMed:23524462). The T cell repertoire is generated in the thymus, by V-(D)-J rearrangement. This repertoire is then shaped by intrathymic selection events to generate a peripheral T cell pool of self-MH restricted, non-autoaggressive T cells. Post-thymic interaction of alpha-beta TR with the pMH complexes shapes TR structural and functional avidity (PubMed:15040585).</text>
</comment>
<comment type="subunit">
    <text evidence="2">Alpha-beta TR is a heterodimer composed of an alpha and beta chain; disulfide-linked. The alpha-beta TR is associated with the transmembrane signaling CD3 coreceptor proteins to form the TR-CD3 (TcR or TCR). The assembly of alpha-beta TR heterodimers with CD3 occurs in the endoplasmic reticulum where a single alpha-beta TR heterodimer associates with one CD3D-CD3E heterodimer, one CD3G-CD3E heterodimer and one CD247 homodimer forming a stable octameric structure. CD3D-CD3E and CD3G-CD3E heterodimers preferentially associate with TR alpha and TR beta chains, respectively. The association of the CD247 homodimer is the last step of TcR assembly in the endoplasmic reticulum and is required for transport to the cell surface.</text>
</comment>
<comment type="subcellular location">
    <subcellularLocation>
        <location evidence="2">Cell membrane</location>
    </subcellularLocation>
</comment>